<accession>Q5C8U3</accession>
<accession>Q0NNX4</accession>
<accession>Q6J662</accession>
<protein>
    <recommendedName>
        <fullName>Tripartite motif-containing protein 5</fullName>
        <ecNumber>2.3.2.27</ecNumber>
    </recommendedName>
    <alternativeName>
        <fullName evidence="9">RING-type E3 ubiquitin transferase TRIM5</fullName>
    </alternativeName>
    <alternativeName>
        <fullName>TRIM5alpha</fullName>
    </alternativeName>
</protein>
<gene>
    <name type="primary">TRIM5</name>
</gene>
<organism>
    <name type="scientific">Chlorocebus tantalus</name>
    <name type="common">Tantalus monkey</name>
    <name type="synonym">Cercopithecus tantalus</name>
    <dbReference type="NCBI Taxonomy" id="60712"/>
    <lineage>
        <taxon>Eukaryota</taxon>
        <taxon>Metazoa</taxon>
        <taxon>Chordata</taxon>
        <taxon>Craniata</taxon>
        <taxon>Vertebrata</taxon>
        <taxon>Euteleostomi</taxon>
        <taxon>Mammalia</taxon>
        <taxon>Eutheria</taxon>
        <taxon>Euarchontoglires</taxon>
        <taxon>Primates</taxon>
        <taxon>Haplorrhini</taxon>
        <taxon>Catarrhini</taxon>
        <taxon>Cercopithecidae</taxon>
        <taxon>Cercopithecinae</taxon>
        <taxon>Chlorocebus</taxon>
    </lineage>
</organism>
<name>TRIM5_CHLTN</name>
<feature type="initiator methionine" description="Removed" evidence="3">
    <location>
        <position position="1"/>
    </location>
</feature>
<feature type="chain" id="PRO_0000273455" description="Tripartite motif-containing protein 5">
    <location>
        <begin position="2"/>
        <end position="515"/>
    </location>
</feature>
<feature type="domain" description="B30.2/SPRY" evidence="7">
    <location>
        <begin position="283"/>
        <end position="515"/>
    </location>
</feature>
<feature type="zinc finger region" description="RING-type" evidence="6">
    <location>
        <begin position="15"/>
        <end position="60"/>
    </location>
</feature>
<feature type="zinc finger region" description="B box-type" evidence="5">
    <location>
        <begin position="92"/>
        <end position="133"/>
    </location>
</feature>
<feature type="region of interest" description="Required for interaction with GABARAP and for autophagy" evidence="2">
    <location>
        <begin position="187"/>
        <end position="200"/>
    </location>
</feature>
<feature type="coiled-coil region" evidence="4">
    <location>
        <begin position="137"/>
        <end position="225"/>
    </location>
</feature>
<feature type="binding site" evidence="5">
    <location>
        <position position="97"/>
    </location>
    <ligand>
        <name>Zn(2+)</name>
        <dbReference type="ChEBI" id="CHEBI:29105"/>
    </ligand>
</feature>
<feature type="binding site" evidence="5">
    <location>
        <position position="100"/>
    </location>
    <ligand>
        <name>Zn(2+)</name>
        <dbReference type="ChEBI" id="CHEBI:29105"/>
    </ligand>
</feature>
<feature type="binding site" evidence="5">
    <location>
        <position position="119"/>
    </location>
    <ligand>
        <name>Zn(2+)</name>
        <dbReference type="ChEBI" id="CHEBI:29105"/>
    </ligand>
</feature>
<feature type="binding site" evidence="5">
    <location>
        <position position="125"/>
    </location>
    <ligand>
        <name>Zn(2+)</name>
        <dbReference type="ChEBI" id="CHEBI:29105"/>
    </ligand>
</feature>
<feature type="modified residue" description="N-acetylalanine" evidence="3">
    <location>
        <position position="2"/>
    </location>
</feature>
<feature type="modified residue" description="Phosphoserine" evidence="3">
    <location>
        <position position="87"/>
    </location>
</feature>
<feature type="sequence conflict" description="In Ref. 1; AAT10388." evidence="9" ref="1">
    <original>V</original>
    <variation>L</variation>
    <location>
        <position position="7"/>
    </location>
</feature>
<feature type="sequence conflict" description="In Ref. 1; AAT10388." evidence="9" ref="1">
    <original>T</original>
    <variation>I</variation>
    <location>
        <position position="165"/>
    </location>
</feature>
<feature type="sequence conflict" description="In Ref. 1; AAT10388." evidence="9" ref="1">
    <original>L</original>
    <variation>S</variation>
    <location>
        <position position="337"/>
    </location>
</feature>
<feature type="sequence conflict" description="In Ref. 1; AAT10388 and 3; ABE28408." evidence="9" ref="1 3">
    <original>Y</original>
    <variation>C</variation>
    <location>
        <position position="347"/>
    </location>
</feature>
<feature type="sequence conflict" description="In Ref. 1; AAT10388." evidence="9" ref="1">
    <original>R</original>
    <variation>L</variation>
    <location>
        <position position="351"/>
    </location>
</feature>
<feature type="sequence conflict" description="In Ref. 1; AAT10388." evidence="9" ref="1">
    <original>G</original>
    <variation>R</variation>
    <location>
        <position position="359"/>
    </location>
</feature>
<feature type="sequence conflict" description="In Ref. 3; ABE28408." evidence="9" ref="3">
    <original>G</original>
    <variation>S</variation>
    <location>
        <position position="438"/>
    </location>
</feature>
<proteinExistence type="evidence at transcript level"/>
<keyword id="KW-0007">Acetylation</keyword>
<keyword id="KW-0051">Antiviral defense</keyword>
<keyword id="KW-0072">Autophagy</keyword>
<keyword id="KW-0175">Coiled coil</keyword>
<keyword id="KW-0963">Cytoplasm</keyword>
<keyword id="KW-0391">Immunity</keyword>
<keyword id="KW-0399">Innate immunity</keyword>
<keyword id="KW-0479">Metal-binding</keyword>
<keyword id="KW-0539">Nucleus</keyword>
<keyword id="KW-0597">Phosphoprotein</keyword>
<keyword id="KW-0808">Transferase</keyword>
<keyword id="KW-0832">Ubl conjugation</keyword>
<keyword id="KW-0833">Ubl conjugation pathway</keyword>
<keyword id="KW-0862">Zinc</keyword>
<keyword id="KW-0863">Zinc-finger</keyword>
<comment type="function">
    <text evidence="3 8">Capsid-specific restriction factor that prevents infection from non-host-adapted retroviruses. Blocks viral replication early in the life cycle, after viral entry but before reverse transcription. In addition to acting as a capsid-specific restriction factor, also acts as a pattern recognition receptor that activates innate immune signaling in response to the retroviral capsid lattice. Binding to the viral capsid triggers its E3 ubiquitin ligase activity, and in concert with the heterodimeric ubiquitin conjugating enzyme complex UBE2V1-UBE2N (also known as UBC13-UEV1A complex) generates 'Lys-63'-linked polyubiquitin chains, which in turn are catalysts in the autophosphorylation of the MAP3K7/TAK1 complex (includes TAK1, TAB2, and TAB3). Activation of the MAP3K7/TAK1 complex by autophosphorylation results in the induction and expression of NF-kappa-B and MAPK-responsive inflammatory genes, thereby leading to an innate immune response in the infected cell. Restricts infection by human immunodeficiency virus type 1 (HIV-1), simian immunodeficiency virus (SIV-mac) and N-tropic murine leukemia viruse (N-MLV) (PubMed:22291694). Plays a role in regulating autophagy through activation of autophagy regulator BECN1 by causing its dissociation from its inhibitors BCL2 and TAB2 (By similarity).</text>
</comment>
<comment type="catalytic activity">
    <reaction>
        <text>S-ubiquitinyl-[E2 ubiquitin-conjugating enzyme]-L-cysteine + [acceptor protein]-L-lysine = [E2 ubiquitin-conjugating enzyme]-L-cysteine + N(6)-ubiquitinyl-[acceptor protein]-L-lysine.</text>
        <dbReference type="EC" id="2.3.2.27"/>
    </reaction>
</comment>
<comment type="pathway">
    <text>Protein modification; protein ubiquitination.</text>
</comment>
<comment type="subunit">
    <text evidence="2 3">Can form homodimers and homotrimers. In addition to lower-order dimerization, also exhibits a higher-order multimerization and both low- and high-order multimerizations are essential for its restriction activity. Interacts with BTBD1 and BTBD2. Interacts with PSMC4, PSMC5, PSMD7 and HSPA8/HSC70. Interacts (via B30.2/SPRY domain) with HSPA1A/B. Interacts with PSMC2, MAP3K7/TAK1, TAB2 and TAB3. Interacts with SQSTM1. Interacts with TRIM6 and TRIM34. Interacts with ULK1 (phosphorylated form), GABARAP, GABARAPL1, GABARAPL2, MAP1LC3A, MAP1LC3C and BECN1.</text>
</comment>
<comment type="subcellular location">
    <subcellularLocation>
        <location evidence="2">Cytoplasm</location>
    </subcellularLocation>
    <subcellularLocation>
        <location evidence="2">Nucleus</location>
    </subcellularLocation>
    <text evidence="2">Predominantly localizes in cytoplasmic bodies. Localization may be influenced by the coexpression of other TRIM proteins, hence partial nuclear localization is observed in the presence of TRIM22 or TRIM27. In cytoplasmic bodies, colocalizes with proteasomal subunits and SQSTM1.</text>
</comment>
<comment type="domain">
    <text evidence="2 3">The B box-type zinc finger domain and the coiled-coil domain contribute to the higher and low order multimerization respectively which is essential for restriction activity. The coiled coil domain is important for higher order multimerization by promoting the initial dimerization.</text>
</comment>
<comment type="domain">
    <text evidence="1">The B30.2/SPRY domain acts as a capsid recognition domain. Polymorphisms in this domain explain the observed species-specific differences among orthologs (By similarity).</text>
</comment>
<comment type="domain">
    <text evidence="1">The RING-type zinc finger domain confers E3 ubiquitin ligase activity and is essential for retrovirus restriction activity, autoubiquitination and higher-order multimerization.</text>
</comment>
<comment type="PTM">
    <text evidence="1">Degraded in a proteasome-independent fashion in the absence of viral infection but in a proteasome-dependent fashion following exposure to restriction sensitive virus.</text>
</comment>
<comment type="PTM">
    <text evidence="1">Autoubiquitinated in a RING finger- and UBE2D2-dependent manner. Monoubiquitinated by TRIM21. Deubiquitinated by Yersinia YopJ. Ubiquitination may not lead to proteasomal degradation (By similarity).</text>
</comment>
<comment type="similarity">
    <text evidence="9">Belongs to the TRIM/RBCC family.</text>
</comment>
<sequence>MASGILVNVKEEVTCPICLELLTEPLSLPCGHSFCQACITANHKESMLYKEEERSCPVCRISYQPENIQPNRHVANIVEKLREVKLSPEEGQKVDHCARHGEKLLLFCQEDSKVICWLCERSQEHRGHHTFLMEEVAQEYHVKLQTALEMLRQKQQEAEKLEADTREEKASWKIQIDYDKTNVSADFEQLREILDWEESNELQNLEKEEEDILKSLTKSETEMVQQTQYMRELISDLEHRLQGSMMELLQGVDGIIKRIENMTLKKPKTFHKNQRRVFRAPDLKGMLDMFRELTDVRRYWVDVTLAPNNISHAVIAEDKRQVSYQNPQIMYQAPGSLFGSLTNFNYYTGVRGSQSITSGKLTNFNYCTGVLGSQSITSGKHYWEVDVSKKSAWILGVCAGFQPDATYNIEQNENYQPKYGYWVIGLQEGDKYSVFQDGSSHTPFAPFIVPLSVIICPDRVGVFVDYEACTVSFFNITNHGFLIYKFSQCSFSKPVFPYLNPRKCTVPMTLCSPSS</sequence>
<reference key="1">
    <citation type="journal article" date="2004" name="Proc. Natl. Acad. Sci. U.S.A.">
        <title>The human and African green monkey TRIM5alpha genes encode Ref1 and Lv1 retroviral restriction factor activities.</title>
        <authorList>
            <person name="Keckesova Z."/>
            <person name="Ylinen L.M."/>
            <person name="Towers G.J."/>
        </authorList>
    </citation>
    <scope>NUCLEOTIDE SEQUENCE [MRNA]</scope>
</reference>
<reference key="2">
    <citation type="journal article" date="2005" name="J. Virol.">
        <title>The B30.2(SPRY) domain of the retroviral restriction factor TRIM5alpha exhibits lineage-specific length and sequence variation in primates.</title>
        <authorList>
            <person name="Song B."/>
            <person name="Gold B."/>
            <person name="O'Huigin C."/>
            <person name="Javanbakht H."/>
            <person name="Li X."/>
            <person name="Stremlau M."/>
            <person name="Winkler C."/>
            <person name="Dean M."/>
            <person name="Sodroski J."/>
        </authorList>
    </citation>
    <scope>NUCLEOTIDE SEQUENCE [MRNA]</scope>
</reference>
<reference key="3">
    <citation type="journal article" date="2006" name="J. Virol.">
        <title>All three variable regions of the TRIM5alpha B30.2 domain can contribute to the specificity of retrovirus restriction.</title>
        <authorList>
            <person name="Ohkura S."/>
            <person name="Yap M.W."/>
            <person name="Sheldon T."/>
            <person name="Stoye J.P."/>
        </authorList>
    </citation>
    <scope>NUCLEOTIDE SEQUENCE [GENOMIC DNA] OF 302-515</scope>
</reference>
<reference key="4">
    <citation type="journal article" date="2012" name="Front. Microbiol.">
        <title>TRIM5alpha and species tropism of HIV/SIV.</title>
        <authorList>
            <person name="Nakayama E.E."/>
            <person name="Shioda T."/>
        </authorList>
    </citation>
    <scope>REVIEW</scope>
    <scope>FUNCTION</scope>
</reference>
<evidence type="ECO:0000250" key="1"/>
<evidence type="ECO:0000250" key="2">
    <source>
        <dbReference type="UniProtKB" id="Q0PF16"/>
    </source>
</evidence>
<evidence type="ECO:0000250" key="3">
    <source>
        <dbReference type="UniProtKB" id="Q9C035"/>
    </source>
</evidence>
<evidence type="ECO:0000255" key="4"/>
<evidence type="ECO:0000255" key="5">
    <source>
        <dbReference type="PROSITE-ProRule" id="PRU00024"/>
    </source>
</evidence>
<evidence type="ECO:0000255" key="6">
    <source>
        <dbReference type="PROSITE-ProRule" id="PRU00175"/>
    </source>
</evidence>
<evidence type="ECO:0000255" key="7">
    <source>
        <dbReference type="PROSITE-ProRule" id="PRU00548"/>
    </source>
</evidence>
<evidence type="ECO:0000269" key="8">
    <source>
    </source>
</evidence>
<evidence type="ECO:0000305" key="9"/>
<dbReference type="EC" id="2.3.2.27"/>
<dbReference type="EMBL" id="AY593973">
    <property type="protein sequence ID" value="AAT10388.2"/>
    <property type="molecule type" value="mRNA"/>
</dbReference>
<dbReference type="EMBL" id="AY740613">
    <property type="protein sequence ID" value="AAW72441.1"/>
    <property type="molecule type" value="mRNA"/>
</dbReference>
<dbReference type="EMBL" id="DQ437606">
    <property type="protein sequence ID" value="ABE28408.1"/>
    <property type="molecule type" value="Genomic_DNA"/>
</dbReference>
<dbReference type="SMR" id="Q5C8U3"/>
<dbReference type="UniPathway" id="UPA00143"/>
<dbReference type="GO" id="GO:0005634">
    <property type="term" value="C:nucleus"/>
    <property type="evidence" value="ECO:0007669"/>
    <property type="project" value="UniProtKB-SubCell"/>
</dbReference>
<dbReference type="GO" id="GO:0000932">
    <property type="term" value="C:P-body"/>
    <property type="evidence" value="ECO:0000250"/>
    <property type="project" value="UniProtKB"/>
</dbReference>
<dbReference type="GO" id="GO:0038187">
    <property type="term" value="F:pattern recognition receptor activity"/>
    <property type="evidence" value="ECO:0000250"/>
    <property type="project" value="UniProtKB"/>
</dbReference>
<dbReference type="GO" id="GO:0004842">
    <property type="term" value="F:ubiquitin-protein transferase activity"/>
    <property type="evidence" value="ECO:0000250"/>
    <property type="project" value="UniProtKB"/>
</dbReference>
<dbReference type="GO" id="GO:0008270">
    <property type="term" value="F:zinc ion binding"/>
    <property type="evidence" value="ECO:0007669"/>
    <property type="project" value="UniProtKB-KW"/>
</dbReference>
<dbReference type="GO" id="GO:0002218">
    <property type="term" value="P:activation of innate immune response"/>
    <property type="evidence" value="ECO:0000250"/>
    <property type="project" value="UniProtKB"/>
</dbReference>
<dbReference type="GO" id="GO:0006914">
    <property type="term" value="P:autophagy"/>
    <property type="evidence" value="ECO:0007669"/>
    <property type="project" value="UniProtKB-KW"/>
</dbReference>
<dbReference type="GO" id="GO:0051607">
    <property type="term" value="P:defense response to virus"/>
    <property type="evidence" value="ECO:0000304"/>
    <property type="project" value="UniProtKB"/>
</dbReference>
<dbReference type="GO" id="GO:0045087">
    <property type="term" value="P:innate immune response"/>
    <property type="evidence" value="ECO:0007669"/>
    <property type="project" value="UniProtKB-KW"/>
</dbReference>
<dbReference type="GO" id="GO:0043123">
    <property type="term" value="P:positive regulation of canonical NF-kappaB signal transduction"/>
    <property type="evidence" value="ECO:0000250"/>
    <property type="project" value="UniProtKB"/>
</dbReference>
<dbReference type="GO" id="GO:0043410">
    <property type="term" value="P:positive regulation of MAPK cascade"/>
    <property type="evidence" value="ECO:0000250"/>
    <property type="project" value="UniProtKB"/>
</dbReference>
<dbReference type="GO" id="GO:0051092">
    <property type="term" value="P:positive regulation of NF-kappaB transcription factor activity"/>
    <property type="evidence" value="ECO:0000250"/>
    <property type="project" value="UniProtKB"/>
</dbReference>
<dbReference type="GO" id="GO:0070534">
    <property type="term" value="P:protein K63-linked ubiquitination"/>
    <property type="evidence" value="ECO:0000250"/>
    <property type="project" value="UniProtKB"/>
</dbReference>
<dbReference type="GO" id="GO:0031664">
    <property type="term" value="P:regulation of lipopolysaccharide-mediated signaling pathway"/>
    <property type="evidence" value="ECO:0000250"/>
    <property type="project" value="UniProtKB"/>
</dbReference>
<dbReference type="CDD" id="cd19761">
    <property type="entry name" value="Bbox2_TRIM5-like"/>
    <property type="match status" value="1"/>
</dbReference>
<dbReference type="CDD" id="cd16591">
    <property type="entry name" value="RING-HC_TRIM5-like_C-IV"/>
    <property type="match status" value="1"/>
</dbReference>
<dbReference type="CDD" id="cd15822">
    <property type="entry name" value="SPRY_PRY_TRIM5"/>
    <property type="match status" value="1"/>
</dbReference>
<dbReference type="FunFam" id="3.30.160.60:FF:000386">
    <property type="entry name" value="Tripartite motif-containing 5 (Predicted)"/>
    <property type="match status" value="1"/>
</dbReference>
<dbReference type="FunFam" id="3.30.40.10:FF:000144">
    <property type="entry name" value="Tripartite motif-containing 5 (Predicted)"/>
    <property type="match status" value="1"/>
</dbReference>
<dbReference type="Gene3D" id="2.60.120.920">
    <property type="match status" value="1"/>
</dbReference>
<dbReference type="Gene3D" id="3.30.160.60">
    <property type="entry name" value="Classic Zinc Finger"/>
    <property type="match status" value="1"/>
</dbReference>
<dbReference type="Gene3D" id="3.30.40.10">
    <property type="entry name" value="Zinc/RING finger domain, C3HC4 (zinc finger)"/>
    <property type="match status" value="1"/>
</dbReference>
<dbReference type="InterPro" id="IPR001870">
    <property type="entry name" value="B30.2/SPRY"/>
</dbReference>
<dbReference type="InterPro" id="IPR043136">
    <property type="entry name" value="B30.2/SPRY_sf"/>
</dbReference>
<dbReference type="InterPro" id="IPR003879">
    <property type="entry name" value="Butyrophylin_SPRY"/>
</dbReference>
<dbReference type="InterPro" id="IPR013320">
    <property type="entry name" value="ConA-like_dom_sf"/>
</dbReference>
<dbReference type="InterPro" id="IPR003877">
    <property type="entry name" value="SPRY_dom"/>
</dbReference>
<dbReference type="InterPro" id="IPR050143">
    <property type="entry name" value="TRIM/RBCC"/>
</dbReference>
<dbReference type="InterPro" id="IPR027370">
    <property type="entry name" value="Znf-RING_euk"/>
</dbReference>
<dbReference type="InterPro" id="IPR000315">
    <property type="entry name" value="Znf_B-box"/>
</dbReference>
<dbReference type="InterPro" id="IPR001841">
    <property type="entry name" value="Znf_RING"/>
</dbReference>
<dbReference type="InterPro" id="IPR013083">
    <property type="entry name" value="Znf_RING/FYVE/PHD"/>
</dbReference>
<dbReference type="InterPro" id="IPR017907">
    <property type="entry name" value="Znf_RING_CS"/>
</dbReference>
<dbReference type="PANTHER" id="PTHR24103">
    <property type="entry name" value="E3 UBIQUITIN-PROTEIN LIGASE TRIM"/>
    <property type="match status" value="1"/>
</dbReference>
<dbReference type="Pfam" id="PF00622">
    <property type="entry name" value="SPRY"/>
    <property type="match status" value="1"/>
</dbReference>
<dbReference type="Pfam" id="PF00643">
    <property type="entry name" value="zf-B_box"/>
    <property type="match status" value="1"/>
</dbReference>
<dbReference type="Pfam" id="PF13445">
    <property type="entry name" value="zf-RING_UBOX"/>
    <property type="match status" value="1"/>
</dbReference>
<dbReference type="PRINTS" id="PR01407">
    <property type="entry name" value="BUTYPHLNCDUF"/>
</dbReference>
<dbReference type="SMART" id="SM00336">
    <property type="entry name" value="BBOX"/>
    <property type="match status" value="1"/>
</dbReference>
<dbReference type="SMART" id="SM00184">
    <property type="entry name" value="RING"/>
    <property type="match status" value="1"/>
</dbReference>
<dbReference type="SMART" id="SM00449">
    <property type="entry name" value="SPRY"/>
    <property type="match status" value="1"/>
</dbReference>
<dbReference type="SUPFAM" id="SSF57845">
    <property type="entry name" value="B-box zinc-binding domain"/>
    <property type="match status" value="1"/>
</dbReference>
<dbReference type="SUPFAM" id="SSF49899">
    <property type="entry name" value="Concanavalin A-like lectins/glucanases"/>
    <property type="match status" value="2"/>
</dbReference>
<dbReference type="SUPFAM" id="SSF57850">
    <property type="entry name" value="RING/U-box"/>
    <property type="match status" value="1"/>
</dbReference>
<dbReference type="PROSITE" id="PS50188">
    <property type="entry name" value="B302_SPRY"/>
    <property type="match status" value="1"/>
</dbReference>
<dbReference type="PROSITE" id="PS50119">
    <property type="entry name" value="ZF_BBOX"/>
    <property type="match status" value="1"/>
</dbReference>
<dbReference type="PROSITE" id="PS00518">
    <property type="entry name" value="ZF_RING_1"/>
    <property type="match status" value="1"/>
</dbReference>
<dbReference type="PROSITE" id="PS50089">
    <property type="entry name" value="ZF_RING_2"/>
    <property type="match status" value="1"/>
</dbReference>